<feature type="chain" id="PRO_0000411527" description="Small ribosomal subunit protein uS15">
    <location>
        <begin position="1"/>
        <end position="89"/>
    </location>
</feature>
<gene>
    <name evidence="1" type="primary">rpsO</name>
    <name type="ordered locus">SPs1683</name>
</gene>
<name>RS15_STRPQ</name>
<sequence length="89" mass="10504">MAISKEKKNEIIAQYARHEGDTGSVEVQVAVLTWEINHLNSHIKEHKKDHATYRGLMKKIGHRRNLLAYLRRTDVNRYRELIQSLGLRR</sequence>
<evidence type="ECO:0000255" key="1">
    <source>
        <dbReference type="HAMAP-Rule" id="MF_01343"/>
    </source>
</evidence>
<evidence type="ECO:0000305" key="2"/>
<protein>
    <recommendedName>
        <fullName evidence="1">Small ribosomal subunit protein uS15</fullName>
    </recommendedName>
    <alternativeName>
        <fullName evidence="2">30S ribosomal protein S15</fullName>
    </alternativeName>
</protein>
<accession>P0DE75</accession>
<accession>Q7CEP9</accession>
<accession>Q8NZC0</accession>
<keyword id="KW-0687">Ribonucleoprotein</keyword>
<keyword id="KW-0689">Ribosomal protein</keyword>
<keyword id="KW-0694">RNA-binding</keyword>
<keyword id="KW-0699">rRNA-binding</keyword>
<comment type="function">
    <text evidence="1">One of the primary rRNA binding proteins, it binds directly to 16S rRNA where it helps nucleate assembly of the platform of the 30S subunit by binding and bridging several RNA helices of the 16S rRNA.</text>
</comment>
<comment type="function">
    <text evidence="1">Forms an intersubunit bridge (bridge B4) with the 23S rRNA of the 50S subunit in the ribosome.</text>
</comment>
<comment type="subunit">
    <text evidence="1">Part of the 30S ribosomal subunit. Forms a bridge to the 50S subunit in the 70S ribosome, contacting the 23S rRNA.</text>
</comment>
<comment type="similarity">
    <text evidence="1">Belongs to the universal ribosomal protein uS15 family.</text>
</comment>
<dbReference type="EMBL" id="BA000034">
    <property type="protein sequence ID" value="BAC64778.1"/>
    <property type="molecule type" value="Genomic_DNA"/>
</dbReference>
<dbReference type="RefSeq" id="WP_002982634.1">
    <property type="nucleotide sequence ID" value="NC_004606.1"/>
</dbReference>
<dbReference type="SMR" id="P0DE75"/>
<dbReference type="KEGG" id="sps:SPs1683"/>
<dbReference type="HOGENOM" id="CLU_148518_0_0_9"/>
<dbReference type="GO" id="GO:0022627">
    <property type="term" value="C:cytosolic small ribosomal subunit"/>
    <property type="evidence" value="ECO:0007669"/>
    <property type="project" value="TreeGrafter"/>
</dbReference>
<dbReference type="GO" id="GO:0019843">
    <property type="term" value="F:rRNA binding"/>
    <property type="evidence" value="ECO:0007669"/>
    <property type="project" value="UniProtKB-UniRule"/>
</dbReference>
<dbReference type="GO" id="GO:0003735">
    <property type="term" value="F:structural constituent of ribosome"/>
    <property type="evidence" value="ECO:0007669"/>
    <property type="project" value="InterPro"/>
</dbReference>
<dbReference type="GO" id="GO:0006412">
    <property type="term" value="P:translation"/>
    <property type="evidence" value="ECO:0007669"/>
    <property type="project" value="UniProtKB-UniRule"/>
</dbReference>
<dbReference type="CDD" id="cd00353">
    <property type="entry name" value="Ribosomal_S15p_S13e"/>
    <property type="match status" value="1"/>
</dbReference>
<dbReference type="FunFam" id="1.10.287.10:FF:000002">
    <property type="entry name" value="30S ribosomal protein S15"/>
    <property type="match status" value="1"/>
</dbReference>
<dbReference type="Gene3D" id="6.10.250.3130">
    <property type="match status" value="1"/>
</dbReference>
<dbReference type="Gene3D" id="1.10.287.10">
    <property type="entry name" value="S15/NS1, RNA-binding"/>
    <property type="match status" value="1"/>
</dbReference>
<dbReference type="HAMAP" id="MF_01343_B">
    <property type="entry name" value="Ribosomal_uS15_B"/>
    <property type="match status" value="1"/>
</dbReference>
<dbReference type="InterPro" id="IPR000589">
    <property type="entry name" value="Ribosomal_uS15"/>
</dbReference>
<dbReference type="InterPro" id="IPR005290">
    <property type="entry name" value="Ribosomal_uS15_bac-type"/>
</dbReference>
<dbReference type="InterPro" id="IPR009068">
    <property type="entry name" value="uS15_NS1_RNA-bd_sf"/>
</dbReference>
<dbReference type="NCBIfam" id="TIGR00952">
    <property type="entry name" value="S15_bact"/>
    <property type="match status" value="1"/>
</dbReference>
<dbReference type="PANTHER" id="PTHR23321">
    <property type="entry name" value="RIBOSOMAL PROTEIN S15, BACTERIAL AND ORGANELLAR"/>
    <property type="match status" value="1"/>
</dbReference>
<dbReference type="PANTHER" id="PTHR23321:SF26">
    <property type="entry name" value="SMALL RIBOSOMAL SUBUNIT PROTEIN US15M"/>
    <property type="match status" value="1"/>
</dbReference>
<dbReference type="Pfam" id="PF00312">
    <property type="entry name" value="Ribosomal_S15"/>
    <property type="match status" value="1"/>
</dbReference>
<dbReference type="SMART" id="SM01387">
    <property type="entry name" value="Ribosomal_S15"/>
    <property type="match status" value="1"/>
</dbReference>
<dbReference type="SUPFAM" id="SSF47060">
    <property type="entry name" value="S15/NS1 RNA-binding domain"/>
    <property type="match status" value="1"/>
</dbReference>
<dbReference type="PROSITE" id="PS00362">
    <property type="entry name" value="RIBOSOMAL_S15"/>
    <property type="match status" value="1"/>
</dbReference>
<reference key="1">
    <citation type="journal article" date="2003" name="Genome Res.">
        <title>Genome sequence of an M3 strain of Streptococcus pyogenes reveals a large-scale genomic rearrangement in invasive strains and new insights into phage evolution.</title>
        <authorList>
            <person name="Nakagawa I."/>
            <person name="Kurokawa K."/>
            <person name="Yamashita A."/>
            <person name="Nakata M."/>
            <person name="Tomiyasu Y."/>
            <person name="Okahashi N."/>
            <person name="Kawabata S."/>
            <person name="Yamazaki K."/>
            <person name="Shiba T."/>
            <person name="Yasunaga T."/>
            <person name="Hayashi H."/>
            <person name="Hattori M."/>
            <person name="Hamada S."/>
        </authorList>
    </citation>
    <scope>NUCLEOTIDE SEQUENCE [LARGE SCALE GENOMIC DNA]</scope>
    <source>
        <strain>SSI-1</strain>
    </source>
</reference>
<proteinExistence type="inferred from homology"/>
<organism>
    <name type="scientific">Streptococcus pyogenes serotype M3 (strain SSI-1)</name>
    <dbReference type="NCBI Taxonomy" id="193567"/>
    <lineage>
        <taxon>Bacteria</taxon>
        <taxon>Bacillati</taxon>
        <taxon>Bacillota</taxon>
        <taxon>Bacilli</taxon>
        <taxon>Lactobacillales</taxon>
        <taxon>Streptococcaceae</taxon>
        <taxon>Streptococcus</taxon>
    </lineage>
</organism>